<sequence length="207" mass="25218">MSTKPDMIQKCLWLEILMGIFIAGTLSLDCNLLNVHLRRVTWQNLRHLSSMSNSFPVECLRENIAFELPQEFLQYTQPMKRDIKKAFYEMSLQAFNIFSQHTFKYWKERHLKQIQIGLDQQAEYLNQCLEEDKNENEDMKEMKENEMKPSEARVPQLSSLELRRYFHRIDNFLKEKKYSDCAWEIVRVEIRRCLYYFYKFTALFRRK</sequence>
<name>IFNK_HUMAN</name>
<gene>
    <name type="primary">IFNK</name>
    <name type="ORF">UNQ6124/PRO20084</name>
</gene>
<dbReference type="EMBL" id="AF146759">
    <property type="protein sequence ID" value="AAF67468.1"/>
    <property type="molecule type" value="mRNA"/>
</dbReference>
<dbReference type="EMBL" id="AF315688">
    <property type="protein sequence ID" value="AAK01623.1"/>
    <property type="molecule type" value="mRNA"/>
</dbReference>
<dbReference type="EMBL" id="AF384048">
    <property type="protein sequence ID" value="AAK63835.1"/>
    <property type="molecule type" value="Genomic_DNA"/>
</dbReference>
<dbReference type="EMBL" id="AY358855">
    <property type="protein sequence ID" value="AAQ89214.1"/>
    <property type="molecule type" value="mRNA"/>
</dbReference>
<dbReference type="EMBL" id="AL451123">
    <property type="status" value="NOT_ANNOTATED_CDS"/>
    <property type="molecule type" value="Genomic_DNA"/>
</dbReference>
<dbReference type="CCDS" id="CCDS6521.1"/>
<dbReference type="RefSeq" id="NP_064509.2">
    <property type="nucleotide sequence ID" value="NM_020124.3"/>
</dbReference>
<dbReference type="SMR" id="Q9P0W0"/>
<dbReference type="BioGRID" id="121205">
    <property type="interactions" value="48"/>
</dbReference>
<dbReference type="ComplexPortal" id="CPX-6009">
    <property type="entry name" value="Interferon kappa receptor-ligand complex"/>
</dbReference>
<dbReference type="FunCoup" id="Q9P0W0">
    <property type="interactions" value="474"/>
</dbReference>
<dbReference type="STRING" id="9606.ENSP00000276943"/>
<dbReference type="iPTMnet" id="Q9P0W0"/>
<dbReference type="PhosphoSitePlus" id="Q9P0W0"/>
<dbReference type="BioMuta" id="IFNK"/>
<dbReference type="DMDM" id="317373367"/>
<dbReference type="MassIVE" id="Q9P0W0"/>
<dbReference type="PaxDb" id="9606-ENSP00000276943"/>
<dbReference type="ProteomicsDB" id="83609"/>
<dbReference type="Antibodypedia" id="25005">
    <property type="antibodies" value="87 antibodies from 17 providers"/>
</dbReference>
<dbReference type="DNASU" id="56832"/>
<dbReference type="Ensembl" id="ENST00000276943.3">
    <property type="protein sequence ID" value="ENSP00000276943.2"/>
    <property type="gene ID" value="ENSG00000147896.4"/>
</dbReference>
<dbReference type="GeneID" id="56832"/>
<dbReference type="KEGG" id="hsa:56832"/>
<dbReference type="MANE-Select" id="ENST00000276943.3">
    <property type="protein sequence ID" value="ENSP00000276943.2"/>
    <property type="RefSeq nucleotide sequence ID" value="NM_020124.3"/>
    <property type="RefSeq protein sequence ID" value="NP_064509.2"/>
</dbReference>
<dbReference type="UCSC" id="uc003zqp.3">
    <property type="organism name" value="human"/>
</dbReference>
<dbReference type="AGR" id="HGNC:21714"/>
<dbReference type="CTD" id="56832"/>
<dbReference type="DisGeNET" id="56832"/>
<dbReference type="GeneCards" id="IFNK"/>
<dbReference type="HGNC" id="HGNC:21714">
    <property type="gene designation" value="IFNK"/>
</dbReference>
<dbReference type="HPA" id="ENSG00000147896">
    <property type="expression patterns" value="Not detected"/>
</dbReference>
<dbReference type="MIM" id="615326">
    <property type="type" value="gene"/>
</dbReference>
<dbReference type="neXtProt" id="NX_Q9P0W0"/>
<dbReference type="OpenTargets" id="ENSG00000147896"/>
<dbReference type="PharmGKB" id="PA134970126"/>
<dbReference type="VEuPathDB" id="HostDB:ENSG00000147896"/>
<dbReference type="eggNOG" id="ENOG502SQGR">
    <property type="taxonomic scope" value="Eukaryota"/>
</dbReference>
<dbReference type="GeneTree" id="ENSGT01000000214430"/>
<dbReference type="HOGENOM" id="CLU_109427_1_0_1"/>
<dbReference type="InParanoid" id="Q9P0W0"/>
<dbReference type="OMA" id="CSWEISR"/>
<dbReference type="OrthoDB" id="8922121at2759"/>
<dbReference type="PAN-GO" id="Q9P0W0">
    <property type="GO annotations" value="12 GO annotations based on evolutionary models"/>
</dbReference>
<dbReference type="PhylomeDB" id="Q9P0W0"/>
<dbReference type="TreeFam" id="TF336177"/>
<dbReference type="PathwayCommons" id="Q9P0W0"/>
<dbReference type="SignaLink" id="Q9P0W0"/>
<dbReference type="BioGRID-ORCS" id="56832">
    <property type="hits" value="6 hits in 1102 CRISPR screens"/>
</dbReference>
<dbReference type="GeneWiki" id="IFNK"/>
<dbReference type="GenomeRNAi" id="56832"/>
<dbReference type="Pharos" id="Q9P0W0">
    <property type="development level" value="Tbio"/>
</dbReference>
<dbReference type="PRO" id="PR:Q9P0W0"/>
<dbReference type="Proteomes" id="UP000005640">
    <property type="component" value="Chromosome 9"/>
</dbReference>
<dbReference type="RNAct" id="Q9P0W0">
    <property type="molecule type" value="protein"/>
</dbReference>
<dbReference type="Bgee" id="ENSG00000147896">
    <property type="expression patterns" value="Expressed in male germ line stem cell (sensu Vertebrata) in testis and 31 other cell types or tissues"/>
</dbReference>
<dbReference type="GO" id="GO:0005576">
    <property type="term" value="C:extracellular region"/>
    <property type="evidence" value="ECO:0000305"/>
    <property type="project" value="UniProtKB"/>
</dbReference>
<dbReference type="GO" id="GO:0005615">
    <property type="term" value="C:extracellular space"/>
    <property type="evidence" value="ECO:0000318"/>
    <property type="project" value="GO_Central"/>
</dbReference>
<dbReference type="GO" id="GO:0005125">
    <property type="term" value="F:cytokine activity"/>
    <property type="evidence" value="ECO:0000318"/>
    <property type="project" value="GO_Central"/>
</dbReference>
<dbReference type="GO" id="GO:0005132">
    <property type="term" value="F:type I interferon receptor binding"/>
    <property type="evidence" value="ECO:0000314"/>
    <property type="project" value="UniProtKB"/>
</dbReference>
<dbReference type="GO" id="GO:0002250">
    <property type="term" value="P:adaptive immune response"/>
    <property type="evidence" value="ECO:0000318"/>
    <property type="project" value="GO_Central"/>
</dbReference>
<dbReference type="GO" id="GO:0002312">
    <property type="term" value="P:B cell activation involved in immune response"/>
    <property type="evidence" value="ECO:0000318"/>
    <property type="project" value="GO_Central"/>
</dbReference>
<dbReference type="GO" id="GO:0098586">
    <property type="term" value="P:cellular response to virus"/>
    <property type="evidence" value="ECO:0000303"/>
    <property type="project" value="ComplexPortal"/>
</dbReference>
<dbReference type="GO" id="GO:0019221">
    <property type="term" value="P:cytokine-mediated signaling pathway"/>
    <property type="evidence" value="ECO:0000314"/>
    <property type="project" value="UniProtKB"/>
</dbReference>
<dbReference type="GO" id="GO:0051607">
    <property type="term" value="P:defense response to virus"/>
    <property type="evidence" value="ECO:0007669"/>
    <property type="project" value="UniProtKB-KW"/>
</dbReference>
<dbReference type="GO" id="GO:0006959">
    <property type="term" value="P:humoral immune response"/>
    <property type="evidence" value="ECO:0000318"/>
    <property type="project" value="GO_Central"/>
</dbReference>
<dbReference type="GO" id="GO:0030101">
    <property type="term" value="P:natural killer cell activation"/>
    <property type="evidence" value="ECO:0000303"/>
    <property type="project" value="UniProtKB"/>
</dbReference>
<dbReference type="GO" id="GO:0002323">
    <property type="term" value="P:natural killer cell activation involved in immune response"/>
    <property type="evidence" value="ECO:0000318"/>
    <property type="project" value="GO_Central"/>
</dbReference>
<dbReference type="GO" id="GO:0008285">
    <property type="term" value="P:negative regulation of cell population proliferation"/>
    <property type="evidence" value="ECO:0000303"/>
    <property type="project" value="UniProtKB"/>
</dbReference>
<dbReference type="GO" id="GO:0045089">
    <property type="term" value="P:positive regulation of innate immune response"/>
    <property type="evidence" value="ECO:0000304"/>
    <property type="project" value="UniProtKB"/>
</dbReference>
<dbReference type="GO" id="GO:0006355">
    <property type="term" value="P:regulation of DNA-templated transcription"/>
    <property type="evidence" value="ECO:0000314"/>
    <property type="project" value="UniProtKB"/>
</dbReference>
<dbReference type="GO" id="GO:0043330">
    <property type="term" value="P:response to exogenous dsRNA"/>
    <property type="evidence" value="ECO:0000318"/>
    <property type="project" value="GO_Central"/>
</dbReference>
<dbReference type="GO" id="GO:0009615">
    <property type="term" value="P:response to virus"/>
    <property type="evidence" value="ECO:0000270"/>
    <property type="project" value="UniProtKB"/>
</dbReference>
<dbReference type="GO" id="GO:0002286">
    <property type="term" value="P:T cell activation involved in immune response"/>
    <property type="evidence" value="ECO:0000318"/>
    <property type="project" value="GO_Central"/>
</dbReference>
<dbReference type="GO" id="GO:0060337">
    <property type="term" value="P:type I interferon-mediated signaling pathway"/>
    <property type="evidence" value="ECO:0000318"/>
    <property type="project" value="GO_Central"/>
</dbReference>
<dbReference type="FunFam" id="1.20.1250.10:FF:000044">
    <property type="entry name" value="Interferon kappa"/>
    <property type="match status" value="1"/>
</dbReference>
<dbReference type="Gene3D" id="1.20.1250.10">
    <property type="match status" value="1"/>
</dbReference>
<dbReference type="InterPro" id="IPR009079">
    <property type="entry name" value="4_helix_cytokine-like_core"/>
</dbReference>
<dbReference type="InterPro" id="IPR000471">
    <property type="entry name" value="Interferon_alpha/beta/delta"/>
</dbReference>
<dbReference type="PANTHER" id="PTHR11691:SF6">
    <property type="entry name" value="INTERFERON KAPPA"/>
    <property type="match status" value="1"/>
</dbReference>
<dbReference type="PANTHER" id="PTHR11691">
    <property type="entry name" value="TYPE I INTERFERON"/>
    <property type="match status" value="1"/>
</dbReference>
<dbReference type="Pfam" id="PF00143">
    <property type="entry name" value="Interferon"/>
    <property type="match status" value="1"/>
</dbReference>
<dbReference type="PRINTS" id="PR00266">
    <property type="entry name" value="INTERFERONAB"/>
</dbReference>
<dbReference type="SMART" id="SM00076">
    <property type="entry name" value="IFabd"/>
    <property type="match status" value="1"/>
</dbReference>
<dbReference type="SUPFAM" id="SSF47266">
    <property type="entry name" value="4-helical cytokines"/>
    <property type="match status" value="1"/>
</dbReference>
<dbReference type="PROSITE" id="PS00252">
    <property type="entry name" value="INTERFERON_A_B_D"/>
    <property type="match status" value="1"/>
</dbReference>
<organism>
    <name type="scientific">Homo sapiens</name>
    <name type="common">Human</name>
    <dbReference type="NCBI Taxonomy" id="9606"/>
    <lineage>
        <taxon>Eukaryota</taxon>
        <taxon>Metazoa</taxon>
        <taxon>Chordata</taxon>
        <taxon>Craniata</taxon>
        <taxon>Vertebrata</taxon>
        <taxon>Euteleostomi</taxon>
        <taxon>Mammalia</taxon>
        <taxon>Eutheria</taxon>
        <taxon>Euarchontoglires</taxon>
        <taxon>Primates</taxon>
        <taxon>Haplorrhini</taxon>
        <taxon>Catarrhini</taxon>
        <taxon>Hominidae</taxon>
        <taxon>Homo</taxon>
    </lineage>
</organism>
<comment type="function">
    <text evidence="3 4">May play a role in the regulation of immune cell function. Cytokine that imparts cellular protection against viral infection in a species-specific manner. Activates the interferon-stimulated response element signaling pathway. It is able to directly modulate cytokine release from monocytes and dendritic cells. Binds heparin.</text>
</comment>
<comment type="subcellular location">
    <subcellularLocation>
        <location>Secreted</location>
    </subcellularLocation>
</comment>
<comment type="tissue specificity">
    <text evidence="3 4">Expressed in keratinocytes, monocytes and in resting dendritic cells.</text>
</comment>
<comment type="induction">
    <text evidence="3">By viral infection, upon exposure to double-stranded RNA, or upon treatment with either interferon-gamma or interferon-beta.</text>
</comment>
<comment type="similarity">
    <text evidence="8">Belongs to the alpha/beta interferon family.</text>
</comment>
<keyword id="KW-0051">Antiviral defense</keyword>
<keyword id="KW-0175">Coiled coil</keyword>
<keyword id="KW-0202">Cytokine</keyword>
<keyword id="KW-0903">Direct protein sequencing</keyword>
<keyword id="KW-1015">Disulfide bond</keyword>
<keyword id="KW-1185">Reference proteome</keyword>
<keyword id="KW-0964">Secreted</keyword>
<keyword id="KW-0732">Signal</keyword>
<feature type="signal peptide" evidence="6">
    <location>
        <begin position="1"/>
        <end position="27"/>
    </location>
</feature>
<feature type="chain" id="PRO_0000016410" description="Interferon kappa">
    <location>
        <begin position="28"/>
        <end position="207"/>
    </location>
</feature>
<feature type="coiled-coil region" evidence="2">
    <location>
        <begin position="118"/>
        <end position="148"/>
    </location>
</feature>
<feature type="disulfide bond" evidence="1">
    <location>
        <begin position="30"/>
        <end position="128"/>
    </location>
</feature>
<feature type="disulfide bond" evidence="1">
    <location>
        <begin position="59"/>
        <end position="181"/>
    </location>
</feature>
<feature type="sequence variant" id="VAR_032710" description="In dbSNP:rs34933275.">
    <original>I</original>
    <variation>N</variation>
    <location>
        <position position="97"/>
    </location>
</feature>
<feature type="sequence variant" id="VAR_021303" description="In dbSNP:rs700785." evidence="3 5 7">
    <original>K</original>
    <variation>E</variation>
    <location>
        <position position="133"/>
    </location>
</feature>
<proteinExistence type="evidence at protein level"/>
<evidence type="ECO:0000250" key="1"/>
<evidence type="ECO:0000255" key="2"/>
<evidence type="ECO:0000269" key="3">
    <source>
    </source>
</evidence>
<evidence type="ECO:0000269" key="4">
    <source>
    </source>
</evidence>
<evidence type="ECO:0000269" key="5">
    <source>
    </source>
</evidence>
<evidence type="ECO:0000269" key="6">
    <source>
    </source>
</evidence>
<evidence type="ECO:0000269" key="7">
    <source ref="1"/>
</evidence>
<evidence type="ECO:0000305" key="8"/>
<reference key="1">
    <citation type="submission" date="1999-04" db="EMBL/GenBank/DDBJ databases">
        <title>Novel human interferon.</title>
        <authorList>
            <person name="Cao X."/>
            <person name="Zhang W."/>
        </authorList>
    </citation>
    <scope>NUCLEOTIDE SEQUENCE [MRNA]</scope>
    <scope>VARIANT GLU-133</scope>
</reference>
<reference key="2">
    <citation type="journal article" date="2001" name="J. Biol. Chem.">
        <title>Interferon-kappa, a novel type I interferon expressed in human keratinocytes.</title>
        <authorList>
            <person name="LaFleur D.W."/>
            <person name="Nardelli B."/>
            <person name="Tsareva T."/>
            <person name="Mather D."/>
            <person name="Feng P."/>
            <person name="Semenuk M."/>
            <person name="Taylor K."/>
            <person name="Buergin M."/>
            <person name="Chinchilla D."/>
            <person name="Roshke V."/>
            <person name="Chen G."/>
            <person name="Ruben S.M."/>
            <person name="Pitha P.M."/>
            <person name="Coleman T.A."/>
            <person name="Moore P.A."/>
        </authorList>
    </citation>
    <scope>NUCLEOTIDE SEQUENCE [GENOMIC DNA / MRNA]</scope>
    <scope>FUNCTION</scope>
    <scope>INDUCTION</scope>
    <scope>TISSUE SPECIFICITY</scope>
    <scope>VARIANT GLU-133</scope>
</reference>
<reference key="3">
    <citation type="journal article" date="2003" name="Genome Res.">
        <title>The secreted protein discovery initiative (SPDI), a large-scale effort to identify novel human secreted and transmembrane proteins: a bioinformatics assessment.</title>
        <authorList>
            <person name="Clark H.F."/>
            <person name="Gurney A.L."/>
            <person name="Abaya E."/>
            <person name="Baker K."/>
            <person name="Baldwin D.T."/>
            <person name="Brush J."/>
            <person name="Chen J."/>
            <person name="Chow B."/>
            <person name="Chui C."/>
            <person name="Crowley C."/>
            <person name="Currell B."/>
            <person name="Deuel B."/>
            <person name="Dowd P."/>
            <person name="Eaton D."/>
            <person name="Foster J.S."/>
            <person name="Grimaldi C."/>
            <person name="Gu Q."/>
            <person name="Hass P.E."/>
            <person name="Heldens S."/>
            <person name="Huang A."/>
            <person name="Kim H.S."/>
            <person name="Klimowski L."/>
            <person name="Jin Y."/>
            <person name="Johnson S."/>
            <person name="Lee J."/>
            <person name="Lewis L."/>
            <person name="Liao D."/>
            <person name="Mark M.R."/>
            <person name="Robbie E."/>
            <person name="Sanchez C."/>
            <person name="Schoenfeld J."/>
            <person name="Seshagiri S."/>
            <person name="Simmons L."/>
            <person name="Singh J."/>
            <person name="Smith V."/>
            <person name="Stinson J."/>
            <person name="Vagts A."/>
            <person name="Vandlen R.L."/>
            <person name="Watanabe C."/>
            <person name="Wieand D."/>
            <person name="Woods K."/>
            <person name="Xie M.-H."/>
            <person name="Yansura D.G."/>
            <person name="Yi S."/>
            <person name="Yu G."/>
            <person name="Yuan J."/>
            <person name="Zhang M."/>
            <person name="Zhang Z."/>
            <person name="Goddard A.D."/>
            <person name="Wood W.I."/>
            <person name="Godowski P.J."/>
            <person name="Gray A.M."/>
        </authorList>
    </citation>
    <scope>NUCLEOTIDE SEQUENCE [LARGE SCALE MRNA]</scope>
    <scope>VARIANT GLU-133</scope>
</reference>
<reference key="4">
    <citation type="journal article" date="2004" name="Nature">
        <title>DNA sequence and analysis of human chromosome 9.</title>
        <authorList>
            <person name="Humphray S.J."/>
            <person name="Oliver K."/>
            <person name="Hunt A.R."/>
            <person name="Plumb R.W."/>
            <person name="Loveland J.E."/>
            <person name="Howe K.L."/>
            <person name="Andrews T.D."/>
            <person name="Searle S."/>
            <person name="Hunt S.E."/>
            <person name="Scott C.E."/>
            <person name="Jones M.C."/>
            <person name="Ainscough R."/>
            <person name="Almeida J.P."/>
            <person name="Ambrose K.D."/>
            <person name="Ashwell R.I.S."/>
            <person name="Babbage A.K."/>
            <person name="Babbage S."/>
            <person name="Bagguley C.L."/>
            <person name="Bailey J."/>
            <person name="Banerjee R."/>
            <person name="Barker D.J."/>
            <person name="Barlow K.F."/>
            <person name="Bates K."/>
            <person name="Beasley H."/>
            <person name="Beasley O."/>
            <person name="Bird C.P."/>
            <person name="Bray-Allen S."/>
            <person name="Brown A.J."/>
            <person name="Brown J.Y."/>
            <person name="Burford D."/>
            <person name="Burrill W."/>
            <person name="Burton J."/>
            <person name="Carder C."/>
            <person name="Carter N.P."/>
            <person name="Chapman J.C."/>
            <person name="Chen Y."/>
            <person name="Clarke G."/>
            <person name="Clark S.Y."/>
            <person name="Clee C.M."/>
            <person name="Clegg S."/>
            <person name="Collier R.E."/>
            <person name="Corby N."/>
            <person name="Crosier M."/>
            <person name="Cummings A.T."/>
            <person name="Davies J."/>
            <person name="Dhami P."/>
            <person name="Dunn M."/>
            <person name="Dutta I."/>
            <person name="Dyer L.W."/>
            <person name="Earthrowl M.E."/>
            <person name="Faulkner L."/>
            <person name="Fleming C.J."/>
            <person name="Frankish A."/>
            <person name="Frankland J.A."/>
            <person name="French L."/>
            <person name="Fricker D.G."/>
            <person name="Garner P."/>
            <person name="Garnett J."/>
            <person name="Ghori J."/>
            <person name="Gilbert J.G.R."/>
            <person name="Glison C."/>
            <person name="Grafham D.V."/>
            <person name="Gribble S."/>
            <person name="Griffiths C."/>
            <person name="Griffiths-Jones S."/>
            <person name="Grocock R."/>
            <person name="Guy J."/>
            <person name="Hall R.E."/>
            <person name="Hammond S."/>
            <person name="Harley J.L."/>
            <person name="Harrison E.S.I."/>
            <person name="Hart E.A."/>
            <person name="Heath P.D."/>
            <person name="Henderson C.D."/>
            <person name="Hopkins B.L."/>
            <person name="Howard P.J."/>
            <person name="Howden P.J."/>
            <person name="Huckle E."/>
            <person name="Johnson C."/>
            <person name="Johnson D."/>
            <person name="Joy A.A."/>
            <person name="Kay M."/>
            <person name="Keenan S."/>
            <person name="Kershaw J.K."/>
            <person name="Kimberley A.M."/>
            <person name="King A."/>
            <person name="Knights A."/>
            <person name="Laird G.K."/>
            <person name="Langford C."/>
            <person name="Lawlor S."/>
            <person name="Leongamornlert D.A."/>
            <person name="Leversha M."/>
            <person name="Lloyd C."/>
            <person name="Lloyd D.M."/>
            <person name="Lovell J."/>
            <person name="Martin S."/>
            <person name="Mashreghi-Mohammadi M."/>
            <person name="Matthews L."/>
            <person name="McLaren S."/>
            <person name="McLay K.E."/>
            <person name="McMurray A."/>
            <person name="Milne S."/>
            <person name="Nickerson T."/>
            <person name="Nisbett J."/>
            <person name="Nordsiek G."/>
            <person name="Pearce A.V."/>
            <person name="Peck A.I."/>
            <person name="Porter K.M."/>
            <person name="Pandian R."/>
            <person name="Pelan S."/>
            <person name="Phillimore B."/>
            <person name="Povey S."/>
            <person name="Ramsey Y."/>
            <person name="Rand V."/>
            <person name="Scharfe M."/>
            <person name="Sehra H.K."/>
            <person name="Shownkeen R."/>
            <person name="Sims S.K."/>
            <person name="Skuce C.D."/>
            <person name="Smith M."/>
            <person name="Steward C.A."/>
            <person name="Swarbreck D."/>
            <person name="Sycamore N."/>
            <person name="Tester J."/>
            <person name="Thorpe A."/>
            <person name="Tracey A."/>
            <person name="Tromans A."/>
            <person name="Thomas D.W."/>
            <person name="Wall M."/>
            <person name="Wallis J.M."/>
            <person name="West A.P."/>
            <person name="Whitehead S.L."/>
            <person name="Willey D.L."/>
            <person name="Williams S.A."/>
            <person name="Wilming L."/>
            <person name="Wray P.W."/>
            <person name="Young L."/>
            <person name="Ashurst J.L."/>
            <person name="Coulson A."/>
            <person name="Blocker H."/>
            <person name="Durbin R.M."/>
            <person name="Sulston J.E."/>
            <person name="Hubbard T."/>
            <person name="Jackson M.J."/>
            <person name="Bentley D.R."/>
            <person name="Beck S."/>
            <person name="Rogers J."/>
            <person name="Dunham I."/>
        </authorList>
    </citation>
    <scope>NUCLEOTIDE SEQUENCE [LARGE SCALE GENOMIC DNA]</scope>
</reference>
<reference key="5">
    <citation type="journal article" date="2004" name="Protein Sci.">
        <title>Signal peptide prediction based on analysis of experimentally verified cleavage sites.</title>
        <authorList>
            <person name="Zhang Z."/>
            <person name="Henzel W.J."/>
        </authorList>
    </citation>
    <scope>PROTEIN SEQUENCE OF 28-42</scope>
</reference>
<reference key="6">
    <citation type="journal article" date="2002" name="J. Immunol.">
        <title>Regulatory effect of IFN-kappa, a novel type I IFN, on cytokine production by cells of the innate immune system.</title>
        <authorList>
            <person name="Nardelli B."/>
            <person name="Zaritskaya L."/>
            <person name="Semenuk M."/>
            <person name="Cho Y.H."/>
            <person name="LaFleur D.W."/>
            <person name="Shah D."/>
            <person name="Ullrich S."/>
            <person name="Girolomoni G."/>
            <person name="Albanesi C."/>
            <person name="Moore P.A."/>
        </authorList>
    </citation>
    <scope>FUNCTION</scope>
    <scope>TISSUE SPECIFICITY</scope>
</reference>
<accession>Q9P0W0</accession>
<accession>Q5T166</accession>
<protein>
    <recommendedName>
        <fullName>Interferon kappa</fullName>
        <shortName>IFN-kappa</shortName>
    </recommendedName>
</protein>